<comment type="function">
    <text evidence="1">Key enzyme in the regulation of glycerol uptake and metabolism. Catalyzes the phosphorylation of glycerol to yield sn-glycerol 3-phosphate.</text>
</comment>
<comment type="catalytic activity">
    <reaction evidence="1">
        <text>glycerol + ATP = sn-glycerol 3-phosphate + ADP + H(+)</text>
        <dbReference type="Rhea" id="RHEA:21644"/>
        <dbReference type="ChEBI" id="CHEBI:15378"/>
        <dbReference type="ChEBI" id="CHEBI:17754"/>
        <dbReference type="ChEBI" id="CHEBI:30616"/>
        <dbReference type="ChEBI" id="CHEBI:57597"/>
        <dbReference type="ChEBI" id="CHEBI:456216"/>
        <dbReference type="EC" id="2.7.1.30"/>
    </reaction>
</comment>
<comment type="activity regulation">
    <text evidence="1">Inhibited by fructose 1,6-bisphosphate (FBP).</text>
</comment>
<comment type="pathway">
    <text evidence="1">Polyol metabolism; glycerol degradation via glycerol kinase pathway; sn-glycerol 3-phosphate from glycerol: step 1/1.</text>
</comment>
<comment type="similarity">
    <text evidence="1">Belongs to the FGGY kinase family.</text>
</comment>
<accession>B1ZGW7</accession>
<sequence>MPDAVGAIDQGTTSTRFIVFDRRGTIRAQAQREHEQIFPRPGWVEHDPREIWRNTHAVMREGLARAGLVPGDLAAIGLTNQRETALLWDRRTGEPLHNALVWQDTRTDRTVAALARDGGRDRFRAVTGLPLASYFSASKLAWLLDHVEGARAKAEDGTALFGTIDSWLVWNLTGGPDGGLHVTDVTNASRTQLMSLATLDWDEAMLGVFRIPRAVLPEIVSSSAVLGETRDPFPGVPVGGILGDQQAALFGQTCFAPGEAKNTYGTGCFALMNTGPEPVASTAGLVTTVAYRLDGRPPAYALEGSIAITGALVQWLRDNLGLIGASSEIEGLARSVEDNGGVYVVPAFSGLYAPHWRDDARGLIIGLTRYANKGHIARACLEATAYQTREVLEAMERDSGCPLSELRCDGGMTVNDLLMQFQADILDRPTLRPKVSETTALGAAYAAGLATGFWKTLEDLRDNWAVDKRWHPHIAAEERRALFAGWGRAVERSFGWVEENA</sequence>
<keyword id="KW-0067">ATP-binding</keyword>
<keyword id="KW-0319">Glycerol metabolism</keyword>
<keyword id="KW-0418">Kinase</keyword>
<keyword id="KW-0547">Nucleotide-binding</keyword>
<keyword id="KW-0808">Transferase</keyword>
<reference key="1">
    <citation type="submission" date="2008-04" db="EMBL/GenBank/DDBJ databases">
        <title>Complete sequence of chromosome of Methylobacterium populi BJ001.</title>
        <authorList>
            <consortium name="US DOE Joint Genome Institute"/>
            <person name="Copeland A."/>
            <person name="Lucas S."/>
            <person name="Lapidus A."/>
            <person name="Glavina del Rio T."/>
            <person name="Dalin E."/>
            <person name="Tice H."/>
            <person name="Bruce D."/>
            <person name="Goodwin L."/>
            <person name="Pitluck S."/>
            <person name="Chertkov O."/>
            <person name="Brettin T."/>
            <person name="Detter J.C."/>
            <person name="Han C."/>
            <person name="Kuske C.R."/>
            <person name="Schmutz J."/>
            <person name="Larimer F."/>
            <person name="Land M."/>
            <person name="Hauser L."/>
            <person name="Kyrpides N."/>
            <person name="Mikhailova N."/>
            <person name="Marx C."/>
            <person name="Richardson P."/>
        </authorList>
    </citation>
    <scope>NUCLEOTIDE SEQUENCE [LARGE SCALE GENOMIC DNA]</scope>
    <source>
        <strain>ATCC BAA-705 / NCIMB 13946 / BJ001</strain>
    </source>
</reference>
<protein>
    <recommendedName>
        <fullName evidence="1">Glycerol kinase</fullName>
        <ecNumber evidence="1">2.7.1.30</ecNumber>
    </recommendedName>
    <alternativeName>
        <fullName evidence="1">ATP:glycerol 3-phosphotransferase</fullName>
    </alternativeName>
    <alternativeName>
        <fullName evidence="1">Glycerokinase</fullName>
        <shortName evidence="1">GK</shortName>
    </alternativeName>
</protein>
<organism>
    <name type="scientific">Methylorubrum populi (strain ATCC BAA-705 / NCIMB 13946 / BJ001)</name>
    <name type="common">Methylobacterium populi</name>
    <dbReference type="NCBI Taxonomy" id="441620"/>
    <lineage>
        <taxon>Bacteria</taxon>
        <taxon>Pseudomonadati</taxon>
        <taxon>Pseudomonadota</taxon>
        <taxon>Alphaproteobacteria</taxon>
        <taxon>Hyphomicrobiales</taxon>
        <taxon>Methylobacteriaceae</taxon>
        <taxon>Methylorubrum</taxon>
    </lineage>
</organism>
<feature type="chain" id="PRO_1000098743" description="Glycerol kinase">
    <location>
        <begin position="1"/>
        <end position="501"/>
    </location>
</feature>
<feature type="binding site" evidence="1">
    <location>
        <position position="12"/>
    </location>
    <ligand>
        <name>ADP</name>
        <dbReference type="ChEBI" id="CHEBI:456216"/>
    </ligand>
</feature>
<feature type="binding site" evidence="1">
    <location>
        <position position="12"/>
    </location>
    <ligand>
        <name>ATP</name>
        <dbReference type="ChEBI" id="CHEBI:30616"/>
    </ligand>
</feature>
<feature type="binding site" evidence="1">
    <location>
        <position position="12"/>
    </location>
    <ligand>
        <name>sn-glycerol 3-phosphate</name>
        <dbReference type="ChEBI" id="CHEBI:57597"/>
    </ligand>
</feature>
<feature type="binding site" evidence="1">
    <location>
        <position position="13"/>
    </location>
    <ligand>
        <name>ATP</name>
        <dbReference type="ChEBI" id="CHEBI:30616"/>
    </ligand>
</feature>
<feature type="binding site" evidence="1">
    <location>
        <position position="14"/>
    </location>
    <ligand>
        <name>ATP</name>
        <dbReference type="ChEBI" id="CHEBI:30616"/>
    </ligand>
</feature>
<feature type="binding site" evidence="1">
    <location>
        <position position="16"/>
    </location>
    <ligand>
        <name>ADP</name>
        <dbReference type="ChEBI" id="CHEBI:456216"/>
    </ligand>
</feature>
<feature type="binding site" evidence="1">
    <location>
        <position position="82"/>
    </location>
    <ligand>
        <name>glycerol</name>
        <dbReference type="ChEBI" id="CHEBI:17754"/>
    </ligand>
</feature>
<feature type="binding site" evidence="1">
    <location>
        <position position="82"/>
    </location>
    <ligand>
        <name>sn-glycerol 3-phosphate</name>
        <dbReference type="ChEBI" id="CHEBI:57597"/>
    </ligand>
</feature>
<feature type="binding site" evidence="1">
    <location>
        <position position="83"/>
    </location>
    <ligand>
        <name>glycerol</name>
        <dbReference type="ChEBI" id="CHEBI:17754"/>
    </ligand>
</feature>
<feature type="binding site" evidence="1">
    <location>
        <position position="83"/>
    </location>
    <ligand>
        <name>sn-glycerol 3-phosphate</name>
        <dbReference type="ChEBI" id="CHEBI:57597"/>
    </ligand>
</feature>
<feature type="binding site" evidence="1">
    <location>
        <position position="134"/>
    </location>
    <ligand>
        <name>glycerol</name>
        <dbReference type="ChEBI" id="CHEBI:17754"/>
    </ligand>
</feature>
<feature type="binding site" evidence="1">
    <location>
        <position position="134"/>
    </location>
    <ligand>
        <name>sn-glycerol 3-phosphate</name>
        <dbReference type="ChEBI" id="CHEBI:57597"/>
    </ligand>
</feature>
<feature type="binding site" evidence="1">
    <location>
        <position position="244"/>
    </location>
    <ligand>
        <name>glycerol</name>
        <dbReference type="ChEBI" id="CHEBI:17754"/>
    </ligand>
</feature>
<feature type="binding site" evidence="1">
    <location>
        <position position="244"/>
    </location>
    <ligand>
        <name>sn-glycerol 3-phosphate</name>
        <dbReference type="ChEBI" id="CHEBI:57597"/>
    </ligand>
</feature>
<feature type="binding site" evidence="1">
    <location>
        <position position="245"/>
    </location>
    <ligand>
        <name>glycerol</name>
        <dbReference type="ChEBI" id="CHEBI:17754"/>
    </ligand>
</feature>
<feature type="binding site" evidence="1">
    <location>
        <position position="266"/>
    </location>
    <ligand>
        <name>ADP</name>
        <dbReference type="ChEBI" id="CHEBI:456216"/>
    </ligand>
</feature>
<feature type="binding site" evidence="1">
    <location>
        <position position="266"/>
    </location>
    <ligand>
        <name>ATP</name>
        <dbReference type="ChEBI" id="CHEBI:30616"/>
    </ligand>
</feature>
<feature type="binding site" evidence="1">
    <location>
        <position position="310"/>
    </location>
    <ligand>
        <name>ADP</name>
        <dbReference type="ChEBI" id="CHEBI:456216"/>
    </ligand>
</feature>
<feature type="binding site" evidence="1">
    <location>
        <position position="310"/>
    </location>
    <ligand>
        <name>ATP</name>
        <dbReference type="ChEBI" id="CHEBI:30616"/>
    </ligand>
</feature>
<feature type="binding site" evidence="1">
    <location>
        <position position="314"/>
    </location>
    <ligand>
        <name>ATP</name>
        <dbReference type="ChEBI" id="CHEBI:30616"/>
    </ligand>
</feature>
<feature type="binding site" evidence="1">
    <location>
        <position position="411"/>
    </location>
    <ligand>
        <name>ADP</name>
        <dbReference type="ChEBI" id="CHEBI:456216"/>
    </ligand>
</feature>
<feature type="binding site" evidence="1">
    <location>
        <position position="411"/>
    </location>
    <ligand>
        <name>ATP</name>
        <dbReference type="ChEBI" id="CHEBI:30616"/>
    </ligand>
</feature>
<feature type="binding site" evidence="1">
    <location>
        <position position="415"/>
    </location>
    <ligand>
        <name>ADP</name>
        <dbReference type="ChEBI" id="CHEBI:456216"/>
    </ligand>
</feature>
<proteinExistence type="inferred from homology"/>
<dbReference type="EC" id="2.7.1.30" evidence="1"/>
<dbReference type="EMBL" id="CP001029">
    <property type="protein sequence ID" value="ACB82645.1"/>
    <property type="molecule type" value="Genomic_DNA"/>
</dbReference>
<dbReference type="RefSeq" id="WP_012456247.1">
    <property type="nucleotide sequence ID" value="NC_010725.1"/>
</dbReference>
<dbReference type="SMR" id="B1ZGW7"/>
<dbReference type="STRING" id="441620.Mpop_4547"/>
<dbReference type="KEGG" id="mpo:Mpop_4547"/>
<dbReference type="eggNOG" id="COG0554">
    <property type="taxonomic scope" value="Bacteria"/>
</dbReference>
<dbReference type="HOGENOM" id="CLU_009281_2_3_5"/>
<dbReference type="OrthoDB" id="9805576at2"/>
<dbReference type="UniPathway" id="UPA00618">
    <property type="reaction ID" value="UER00672"/>
</dbReference>
<dbReference type="Proteomes" id="UP000007136">
    <property type="component" value="Chromosome"/>
</dbReference>
<dbReference type="GO" id="GO:0005829">
    <property type="term" value="C:cytosol"/>
    <property type="evidence" value="ECO:0007669"/>
    <property type="project" value="TreeGrafter"/>
</dbReference>
<dbReference type="GO" id="GO:0005524">
    <property type="term" value="F:ATP binding"/>
    <property type="evidence" value="ECO:0007669"/>
    <property type="project" value="UniProtKB-UniRule"/>
</dbReference>
<dbReference type="GO" id="GO:0004370">
    <property type="term" value="F:glycerol kinase activity"/>
    <property type="evidence" value="ECO:0000250"/>
    <property type="project" value="UniProtKB"/>
</dbReference>
<dbReference type="GO" id="GO:0019563">
    <property type="term" value="P:glycerol catabolic process"/>
    <property type="evidence" value="ECO:0007669"/>
    <property type="project" value="UniProtKB-UniRule"/>
</dbReference>
<dbReference type="GO" id="GO:0006071">
    <property type="term" value="P:glycerol metabolic process"/>
    <property type="evidence" value="ECO:0000250"/>
    <property type="project" value="UniProtKB"/>
</dbReference>
<dbReference type="GO" id="GO:0006072">
    <property type="term" value="P:glycerol-3-phosphate metabolic process"/>
    <property type="evidence" value="ECO:0007669"/>
    <property type="project" value="InterPro"/>
</dbReference>
<dbReference type="CDD" id="cd07769">
    <property type="entry name" value="ASKHA_NBD_FGGY_GK"/>
    <property type="match status" value="1"/>
</dbReference>
<dbReference type="FunFam" id="3.30.420.40:FF:000007">
    <property type="entry name" value="Glycerol kinase"/>
    <property type="match status" value="1"/>
</dbReference>
<dbReference type="FunFam" id="3.30.420.40:FF:000008">
    <property type="entry name" value="Glycerol kinase"/>
    <property type="match status" value="1"/>
</dbReference>
<dbReference type="Gene3D" id="3.30.420.40">
    <property type="match status" value="2"/>
</dbReference>
<dbReference type="HAMAP" id="MF_00186">
    <property type="entry name" value="Glycerol_kin"/>
    <property type="match status" value="1"/>
</dbReference>
<dbReference type="InterPro" id="IPR043129">
    <property type="entry name" value="ATPase_NBD"/>
</dbReference>
<dbReference type="InterPro" id="IPR000577">
    <property type="entry name" value="Carb_kinase_FGGY"/>
</dbReference>
<dbReference type="InterPro" id="IPR018483">
    <property type="entry name" value="Carb_kinase_FGGY_CS"/>
</dbReference>
<dbReference type="InterPro" id="IPR018485">
    <property type="entry name" value="FGGY_C"/>
</dbReference>
<dbReference type="InterPro" id="IPR018484">
    <property type="entry name" value="FGGY_N"/>
</dbReference>
<dbReference type="InterPro" id="IPR005999">
    <property type="entry name" value="Glycerol_kin"/>
</dbReference>
<dbReference type="NCBIfam" id="TIGR01311">
    <property type="entry name" value="glycerol_kin"/>
    <property type="match status" value="1"/>
</dbReference>
<dbReference type="NCBIfam" id="NF000756">
    <property type="entry name" value="PRK00047.1"/>
    <property type="match status" value="1"/>
</dbReference>
<dbReference type="PANTHER" id="PTHR10196:SF69">
    <property type="entry name" value="GLYCEROL KINASE"/>
    <property type="match status" value="1"/>
</dbReference>
<dbReference type="PANTHER" id="PTHR10196">
    <property type="entry name" value="SUGAR KINASE"/>
    <property type="match status" value="1"/>
</dbReference>
<dbReference type="Pfam" id="PF02782">
    <property type="entry name" value="FGGY_C"/>
    <property type="match status" value="1"/>
</dbReference>
<dbReference type="Pfam" id="PF00370">
    <property type="entry name" value="FGGY_N"/>
    <property type="match status" value="1"/>
</dbReference>
<dbReference type="PIRSF" id="PIRSF000538">
    <property type="entry name" value="GlpK"/>
    <property type="match status" value="1"/>
</dbReference>
<dbReference type="SUPFAM" id="SSF53067">
    <property type="entry name" value="Actin-like ATPase domain"/>
    <property type="match status" value="2"/>
</dbReference>
<dbReference type="PROSITE" id="PS00933">
    <property type="entry name" value="FGGY_KINASES_1"/>
    <property type="match status" value="1"/>
</dbReference>
<name>GLPK_METPB</name>
<evidence type="ECO:0000255" key="1">
    <source>
        <dbReference type="HAMAP-Rule" id="MF_00186"/>
    </source>
</evidence>
<gene>
    <name evidence="1" type="primary">glpK</name>
    <name type="ordered locus">Mpop_4547</name>
</gene>